<dbReference type="EC" id="2.4.1.-"/>
<dbReference type="EMBL" id="CM000133">
    <property type="protein sequence ID" value="EAZ06603.1"/>
    <property type="molecule type" value="Genomic_DNA"/>
</dbReference>
<dbReference type="SMR" id="A2YU42"/>
<dbReference type="STRING" id="39946.A2YU42"/>
<dbReference type="EnsemblPlants" id="BGIOSGA027158-TA">
    <property type="protein sequence ID" value="BGIOSGA027158-PA"/>
    <property type="gene ID" value="BGIOSGA027158"/>
</dbReference>
<dbReference type="EnsemblPlants" id="OsGoSa_06g0000810.01">
    <property type="protein sequence ID" value="OsGoSa_06g0000810.01"/>
    <property type="gene ID" value="OsGoSa_06g0000810"/>
</dbReference>
<dbReference type="EnsemblPlants" id="OsKYG_06g0000790.01">
    <property type="protein sequence ID" value="OsKYG_06g0000790.01"/>
    <property type="gene ID" value="OsKYG_06g0000790"/>
</dbReference>
<dbReference type="EnsemblPlants" id="OsLima_06g0000790.01">
    <property type="protein sequence ID" value="OsLima_06g0000790.01"/>
    <property type="gene ID" value="OsLima_06g0000790"/>
</dbReference>
<dbReference type="EnsemblPlants" id="OsLiXu_Ung0024790.01">
    <property type="protein sequence ID" value="OsLiXu_Ung0024790.01"/>
    <property type="gene ID" value="OsLiXu_Ung0024790"/>
</dbReference>
<dbReference type="EnsemblPlants" id="OsPr106_06g0000790.01">
    <property type="protein sequence ID" value="OsPr106_06g0000790.01"/>
    <property type="gene ID" value="OsPr106_06g0000790"/>
</dbReference>
<dbReference type="EnsemblPlants" id="OsZS97_06G000780_01">
    <property type="protein sequence ID" value="OsZS97_06G000780_01"/>
    <property type="gene ID" value="OsZS97_06G000780"/>
</dbReference>
<dbReference type="Gramene" id="BGIOSGA027158-TA">
    <property type="protein sequence ID" value="BGIOSGA027158-PA"/>
    <property type="gene ID" value="BGIOSGA027158"/>
</dbReference>
<dbReference type="Gramene" id="OsGoSa_06g0000810.01">
    <property type="protein sequence ID" value="OsGoSa_06g0000810.01"/>
    <property type="gene ID" value="OsGoSa_06g0000810"/>
</dbReference>
<dbReference type="Gramene" id="OsKYG_06g0000790.01">
    <property type="protein sequence ID" value="OsKYG_06g0000790.01"/>
    <property type="gene ID" value="OsKYG_06g0000790"/>
</dbReference>
<dbReference type="Gramene" id="OsLima_06g0000790.01">
    <property type="protein sequence ID" value="OsLima_06g0000790.01"/>
    <property type="gene ID" value="OsLima_06g0000790"/>
</dbReference>
<dbReference type="Gramene" id="OsLiXu_Ung0024790.01">
    <property type="protein sequence ID" value="OsLiXu_Ung0024790.01"/>
    <property type="gene ID" value="OsLiXu_Ung0024790"/>
</dbReference>
<dbReference type="Gramene" id="OsPr106_06g0000790.01">
    <property type="protein sequence ID" value="OsPr106_06g0000790.01"/>
    <property type="gene ID" value="OsPr106_06g0000790"/>
</dbReference>
<dbReference type="Gramene" id="OsZS97_06G000780_01">
    <property type="protein sequence ID" value="OsZS97_06G000780_01"/>
    <property type="gene ID" value="OsZS97_06G000780"/>
</dbReference>
<dbReference type="HOGENOM" id="CLU_001418_1_0_1"/>
<dbReference type="OMA" id="KKHASMA"/>
<dbReference type="OrthoDB" id="72851at2759"/>
<dbReference type="Proteomes" id="UP000007015">
    <property type="component" value="Chromosome 8"/>
</dbReference>
<dbReference type="GO" id="GO:0000139">
    <property type="term" value="C:Golgi membrane"/>
    <property type="evidence" value="ECO:0007669"/>
    <property type="project" value="UniProtKB-SubCell"/>
</dbReference>
<dbReference type="GO" id="GO:0016760">
    <property type="term" value="F:cellulose synthase (UDP-forming) activity"/>
    <property type="evidence" value="ECO:0007669"/>
    <property type="project" value="InterPro"/>
</dbReference>
<dbReference type="GO" id="GO:0071555">
    <property type="term" value="P:cell wall organization"/>
    <property type="evidence" value="ECO:0007669"/>
    <property type="project" value="UniProtKB-KW"/>
</dbReference>
<dbReference type="GO" id="GO:0030244">
    <property type="term" value="P:cellulose biosynthetic process"/>
    <property type="evidence" value="ECO:0007669"/>
    <property type="project" value="InterPro"/>
</dbReference>
<dbReference type="GO" id="GO:0071669">
    <property type="term" value="P:plant-type cell wall organization or biogenesis"/>
    <property type="evidence" value="ECO:0007669"/>
    <property type="project" value="UniProtKB-ARBA"/>
</dbReference>
<dbReference type="FunFam" id="3.30.40.10:FF:000229">
    <property type="entry name" value="Cellulose synthase-like protein D3"/>
    <property type="match status" value="1"/>
</dbReference>
<dbReference type="FunFam" id="3.90.550.10:FF:000040">
    <property type="entry name" value="cellulose synthase-like protein D3"/>
    <property type="match status" value="1"/>
</dbReference>
<dbReference type="Gene3D" id="3.90.550.10">
    <property type="entry name" value="Spore Coat Polysaccharide Biosynthesis Protein SpsA, Chain A"/>
    <property type="match status" value="1"/>
</dbReference>
<dbReference type="Gene3D" id="3.30.40.10">
    <property type="entry name" value="Zinc/RING finger domain, C3HC4 (zinc finger)"/>
    <property type="match status" value="1"/>
</dbReference>
<dbReference type="InterPro" id="IPR005150">
    <property type="entry name" value="Cellulose_synth"/>
</dbReference>
<dbReference type="InterPro" id="IPR029044">
    <property type="entry name" value="Nucleotide-diphossugar_trans"/>
</dbReference>
<dbReference type="InterPro" id="IPR013083">
    <property type="entry name" value="Znf_RING/FYVE/PHD"/>
</dbReference>
<dbReference type="PANTHER" id="PTHR13301">
    <property type="entry name" value="X-BOX TRANSCRIPTION FACTOR-RELATED"/>
    <property type="match status" value="1"/>
</dbReference>
<dbReference type="Pfam" id="PF03552">
    <property type="entry name" value="Cellulose_synt"/>
    <property type="match status" value="1"/>
</dbReference>
<dbReference type="Pfam" id="PF14570">
    <property type="entry name" value="zf-RING_4"/>
    <property type="match status" value="1"/>
</dbReference>
<dbReference type="SUPFAM" id="SSF53448">
    <property type="entry name" value="Nucleotide-diphospho-sugar transferases"/>
    <property type="match status" value="1"/>
</dbReference>
<dbReference type="SUPFAM" id="SSF57850">
    <property type="entry name" value="RING/U-box"/>
    <property type="match status" value="1"/>
</dbReference>
<name>CSLD2_ORYSI</name>
<sequence length="1170" mass="130211">MASNGGGGLRHSNSSRLSRMSYSGEDGRSQAPGGGGDRPMVTFARRTHSGRYVSYSRDDLDSELGNSGDMSPESGQEFLNYHVTIPATPDNQPMDPAISARVEEQYVSNSLFTGGFNSVTRAHLMDKVIESEASHPQMAGAKGSSCAINGCDAKVMSDERGDDILPCECDFKICADCFADAVKNGGACPGCKDPYKATELDDVVGARPTLSLPPPPGGLPASRMERRLSIMRSQKAMTRSQTGDWDHNRWLFETKGTYGYGNAIWPKENEVDNGGGGGGGGGLGGGDGQPAEFTSKPWRPLTRKLKIPAGVLSPYRLLILIRMAVLGLFLAWRIKHKNEDAMWLWGMSVVCELWFGLSWLLDQLPKLCPVNRATDLAVLKDKFETPTPSNPNGRSDLPGLDIFVSTADPEKEPPLVTANTILSILAADYPVEKLSCYVSDDGGALLTFEAMAEAASFANMWVPFCRKHDIEPRNPESYFNLKRDPYKNKVRSDFVKDRRRVKREYDEFKVRINSLPDSIRRRSDAYHAREEIKAMKRQREAALDDVVEAVKIPKATWMADGTHWPGTWIQPSAEHARGDHAGIIQVMLKPPSDDPLYGTSSEEGRPLDFTEVDIRLPMLVYVSREKRPGYDHNKKAGAMNALVRSSAVMSNGPFILNLDCDHYVYNSQAFREGMCFMMDRGGDRIGYVQFPQRFEGIDPSDRYANHNTVFFDVNMRALDGIMGPVYVGTGCLFRRIALYGFDPPRSKEHSGCCSCCFPQRRKVKTSTVASEERQALRMADFDDEEMNMSQFPKKFGNSNFLINSIPIAEFQGRPLADHPGVKNGRPPGALTVPRDLLDASTVAEAISVISCWYEDKTEWGQRVGWIYGSVTEDVVTGYRMHNRGWKSVYCVTKRDAFRGTAPINLTDRLHQVLRWATGSVEIFFSRNNALLASRKMKFLQRIAYLNVGIYPFTSIFLIVYCFLPALSLFSGQFIVRTLNVTFLTYLLVITLTMCMLAVLEIKWSGISLEEWWRNEQFWLIGGTSAHLAAVLQGLLKVIAGIEISFTLTSKSGGDEADDEFADLYIVKWTSLMIPPIVIMMVNLIAIAVGFSRTIYSEIPQWSKLLGGVFFSFWVLAHLYPFAKGLMGRRGRTPTIVFVWSGLLAITISLLWVAINPPSQNSQIGGSFTFP</sequence>
<comment type="function">
    <text>Thought to be a Golgi-localized beta-glycan synthase that polymerize the backbones of noncellulosic polysaccharides (hemicelluloses) of plant cell wall.</text>
</comment>
<comment type="subcellular location">
    <subcellularLocation>
        <location evidence="3">Golgi apparatus membrane</location>
        <topology evidence="3">Multi-pass membrane protein</topology>
    </subcellularLocation>
</comment>
<comment type="similarity">
    <text evidence="3">Belongs to the glycosyltransferase 2 family. Plant cellulose synthase-like D subfamily.</text>
</comment>
<gene>
    <name type="primary">CSLD2</name>
    <name type="ORF">OsI_027835</name>
</gene>
<evidence type="ECO:0000255" key="1"/>
<evidence type="ECO:0000256" key="2">
    <source>
        <dbReference type="SAM" id="MobiDB-lite"/>
    </source>
</evidence>
<evidence type="ECO:0000305" key="3"/>
<reference key="1">
    <citation type="journal article" date="2005" name="PLoS Biol.">
        <title>The genomes of Oryza sativa: a history of duplications.</title>
        <authorList>
            <person name="Yu J."/>
            <person name="Wang J."/>
            <person name="Lin W."/>
            <person name="Li S."/>
            <person name="Li H."/>
            <person name="Zhou J."/>
            <person name="Ni P."/>
            <person name="Dong W."/>
            <person name="Hu S."/>
            <person name="Zeng C."/>
            <person name="Zhang J."/>
            <person name="Zhang Y."/>
            <person name="Li R."/>
            <person name="Xu Z."/>
            <person name="Li S."/>
            <person name="Li X."/>
            <person name="Zheng H."/>
            <person name="Cong L."/>
            <person name="Lin L."/>
            <person name="Yin J."/>
            <person name="Geng J."/>
            <person name="Li G."/>
            <person name="Shi J."/>
            <person name="Liu J."/>
            <person name="Lv H."/>
            <person name="Li J."/>
            <person name="Wang J."/>
            <person name="Deng Y."/>
            <person name="Ran L."/>
            <person name="Shi X."/>
            <person name="Wang X."/>
            <person name="Wu Q."/>
            <person name="Li C."/>
            <person name="Ren X."/>
            <person name="Wang J."/>
            <person name="Wang X."/>
            <person name="Li D."/>
            <person name="Liu D."/>
            <person name="Zhang X."/>
            <person name="Ji Z."/>
            <person name="Zhao W."/>
            <person name="Sun Y."/>
            <person name="Zhang Z."/>
            <person name="Bao J."/>
            <person name="Han Y."/>
            <person name="Dong L."/>
            <person name="Ji J."/>
            <person name="Chen P."/>
            <person name="Wu S."/>
            <person name="Liu J."/>
            <person name="Xiao Y."/>
            <person name="Bu D."/>
            <person name="Tan J."/>
            <person name="Yang L."/>
            <person name="Ye C."/>
            <person name="Zhang J."/>
            <person name="Xu J."/>
            <person name="Zhou Y."/>
            <person name="Yu Y."/>
            <person name="Zhang B."/>
            <person name="Zhuang S."/>
            <person name="Wei H."/>
            <person name="Liu B."/>
            <person name="Lei M."/>
            <person name="Yu H."/>
            <person name="Li Y."/>
            <person name="Xu H."/>
            <person name="Wei S."/>
            <person name="He X."/>
            <person name="Fang L."/>
            <person name="Zhang Z."/>
            <person name="Zhang Y."/>
            <person name="Huang X."/>
            <person name="Su Z."/>
            <person name="Tong W."/>
            <person name="Li J."/>
            <person name="Tong Z."/>
            <person name="Li S."/>
            <person name="Ye J."/>
            <person name="Wang L."/>
            <person name="Fang L."/>
            <person name="Lei T."/>
            <person name="Chen C.-S."/>
            <person name="Chen H.-C."/>
            <person name="Xu Z."/>
            <person name="Li H."/>
            <person name="Huang H."/>
            <person name="Zhang F."/>
            <person name="Xu H."/>
            <person name="Li N."/>
            <person name="Zhao C."/>
            <person name="Li S."/>
            <person name="Dong L."/>
            <person name="Huang Y."/>
            <person name="Li L."/>
            <person name="Xi Y."/>
            <person name="Qi Q."/>
            <person name="Li W."/>
            <person name="Zhang B."/>
            <person name="Hu W."/>
            <person name="Zhang Y."/>
            <person name="Tian X."/>
            <person name="Jiao Y."/>
            <person name="Liang X."/>
            <person name="Jin J."/>
            <person name="Gao L."/>
            <person name="Zheng W."/>
            <person name="Hao B."/>
            <person name="Liu S.-M."/>
            <person name="Wang W."/>
            <person name="Yuan L."/>
            <person name="Cao M."/>
            <person name="McDermott J."/>
            <person name="Samudrala R."/>
            <person name="Wang J."/>
            <person name="Wong G.K.-S."/>
            <person name="Yang H."/>
        </authorList>
    </citation>
    <scope>NUCLEOTIDE SEQUENCE [LARGE SCALE GENOMIC DNA]</scope>
    <source>
        <strain>cv. 93-11</strain>
    </source>
</reference>
<reference key="2">
    <citation type="journal article" date="2002" name="Plant Physiol.">
        <title>Cellulose synthase-like genes of rice.</title>
        <authorList>
            <person name="Hazen S.P."/>
            <person name="Scott-Craig J.S."/>
            <person name="Walton J.D."/>
        </authorList>
    </citation>
    <scope>GENE FAMILY</scope>
    <scope>NOMENCLATURE</scope>
</reference>
<protein>
    <recommendedName>
        <fullName>Cellulose synthase-like protein D2</fullName>
        <ecNumber>2.4.1.-</ecNumber>
    </recommendedName>
    <alternativeName>
        <fullName>OsCslD2</fullName>
    </alternativeName>
</protein>
<feature type="chain" id="PRO_0000319392" description="Cellulose synthase-like protein D2">
    <location>
        <begin position="1"/>
        <end position="1170"/>
    </location>
</feature>
<feature type="transmembrane region" description="Helical" evidence="1">
    <location>
        <begin position="311"/>
        <end position="331"/>
    </location>
</feature>
<feature type="transmembrane region" description="Helical" evidence="1">
    <location>
        <begin position="341"/>
        <end position="361"/>
    </location>
</feature>
<feature type="transmembrane region" description="Helical" evidence="1">
    <location>
        <begin position="955"/>
        <end position="975"/>
    </location>
</feature>
<feature type="transmembrane region" description="Helical" evidence="1">
    <location>
        <begin position="981"/>
        <end position="1001"/>
    </location>
</feature>
<feature type="transmembrane region" description="Helical" evidence="1">
    <location>
        <begin position="1027"/>
        <end position="1047"/>
    </location>
</feature>
<feature type="transmembrane region" description="Helical" evidence="1">
    <location>
        <begin position="1070"/>
        <end position="1090"/>
    </location>
</feature>
<feature type="transmembrane region" description="Helical" evidence="1">
    <location>
        <begin position="1104"/>
        <end position="1124"/>
    </location>
</feature>
<feature type="transmembrane region" description="Helical" evidence="1">
    <location>
        <begin position="1134"/>
        <end position="1154"/>
    </location>
</feature>
<feature type="region of interest" description="Disordered" evidence="2">
    <location>
        <begin position="1"/>
        <end position="75"/>
    </location>
</feature>
<feature type="region of interest" description="Disordered" evidence="2">
    <location>
        <begin position="269"/>
        <end position="295"/>
    </location>
</feature>
<feature type="coiled-coil region" evidence="1">
    <location>
        <begin position="527"/>
        <end position="551"/>
    </location>
</feature>
<feature type="compositionally biased region" description="Low complexity" evidence="2">
    <location>
        <begin position="10"/>
        <end position="24"/>
    </location>
</feature>
<feature type="compositionally biased region" description="Gly residues" evidence="2">
    <location>
        <begin position="273"/>
        <end position="288"/>
    </location>
</feature>
<feature type="active site" evidence="1">
    <location>
        <position position="441"/>
    </location>
</feature>
<feature type="active site" evidence="1">
    <location>
        <position position="873"/>
    </location>
</feature>
<keyword id="KW-0961">Cell wall biogenesis/degradation</keyword>
<keyword id="KW-0175">Coiled coil</keyword>
<keyword id="KW-0328">Glycosyltransferase</keyword>
<keyword id="KW-0333">Golgi apparatus</keyword>
<keyword id="KW-0472">Membrane</keyword>
<keyword id="KW-1185">Reference proteome</keyword>
<keyword id="KW-0808">Transferase</keyword>
<keyword id="KW-0812">Transmembrane</keyword>
<keyword id="KW-1133">Transmembrane helix</keyword>
<proteinExistence type="inferred from homology"/>
<accession>A2YU42</accession>
<organism>
    <name type="scientific">Oryza sativa subsp. indica</name>
    <name type="common">Rice</name>
    <dbReference type="NCBI Taxonomy" id="39946"/>
    <lineage>
        <taxon>Eukaryota</taxon>
        <taxon>Viridiplantae</taxon>
        <taxon>Streptophyta</taxon>
        <taxon>Embryophyta</taxon>
        <taxon>Tracheophyta</taxon>
        <taxon>Spermatophyta</taxon>
        <taxon>Magnoliopsida</taxon>
        <taxon>Liliopsida</taxon>
        <taxon>Poales</taxon>
        <taxon>Poaceae</taxon>
        <taxon>BOP clade</taxon>
        <taxon>Oryzoideae</taxon>
        <taxon>Oryzeae</taxon>
        <taxon>Oryzinae</taxon>
        <taxon>Oryza</taxon>
        <taxon>Oryza sativa</taxon>
    </lineage>
</organism>